<evidence type="ECO:0000250" key="1"/>
<evidence type="ECO:0000250" key="2">
    <source>
        <dbReference type="UniProtKB" id="Q01973"/>
    </source>
</evidence>
<evidence type="ECO:0000255" key="3"/>
<evidence type="ECO:0000255" key="4">
    <source>
        <dbReference type="PROSITE-ProRule" id="PRU00090"/>
    </source>
</evidence>
<evidence type="ECO:0000255" key="5">
    <source>
        <dbReference type="PROSITE-ProRule" id="PRU00121"/>
    </source>
</evidence>
<evidence type="ECO:0000255" key="6">
    <source>
        <dbReference type="PROSITE-ProRule" id="PRU00159"/>
    </source>
</evidence>
<evidence type="ECO:0000256" key="7">
    <source>
        <dbReference type="SAM" id="MobiDB-lite"/>
    </source>
</evidence>
<evidence type="ECO:0000269" key="8">
    <source>
    </source>
</evidence>
<evidence type="ECO:0000305" key="9"/>
<proteinExistence type="evidence at transcript level"/>
<keyword id="KW-0067">ATP-binding</keyword>
<keyword id="KW-0966">Cell projection</keyword>
<keyword id="KW-1015">Disulfide bond</keyword>
<keyword id="KW-0325">Glycoprotein</keyword>
<keyword id="KW-0393">Immunoglobulin domain</keyword>
<keyword id="KW-0420">Kringle</keyword>
<keyword id="KW-0472">Membrane</keyword>
<keyword id="KW-0547">Nucleotide-binding</keyword>
<keyword id="KW-0597">Phosphoprotein</keyword>
<keyword id="KW-0675">Receptor</keyword>
<keyword id="KW-1185">Reference proteome</keyword>
<keyword id="KW-0732">Signal</keyword>
<keyword id="KW-0812">Transmembrane</keyword>
<keyword id="KW-1133">Transmembrane helix</keyword>
<keyword id="KW-0879">Wnt signaling pathway</keyword>
<organism>
    <name type="scientific">Mus musculus</name>
    <name type="common">Mouse</name>
    <dbReference type="NCBI Taxonomy" id="10090"/>
    <lineage>
        <taxon>Eukaryota</taxon>
        <taxon>Metazoa</taxon>
        <taxon>Chordata</taxon>
        <taxon>Craniata</taxon>
        <taxon>Vertebrata</taxon>
        <taxon>Euteleostomi</taxon>
        <taxon>Mammalia</taxon>
        <taxon>Eutheria</taxon>
        <taxon>Euarchontoglires</taxon>
        <taxon>Glires</taxon>
        <taxon>Rodentia</taxon>
        <taxon>Myomorpha</taxon>
        <taxon>Muroidea</taxon>
        <taxon>Muridae</taxon>
        <taxon>Murinae</taxon>
        <taxon>Mus</taxon>
        <taxon>Mus</taxon>
    </lineage>
</organism>
<name>ROR1_MOUSE</name>
<comment type="function">
    <text evidence="2 8">Has very low kinase activity in vitro and is unlikely to function as a tyrosine kinase in vivo (By similarity). Receptor for ligand WNT5A which activate downstream NFkB signaling pathway and may result in the inhibition of WNT3A-mediated signaling (By similarity). In inner ear, crucial for spiral ganglion neurons to innervate auditory hair cells (PubMed:27162350). Via IGFBP5 ligand, forms a complex with ERBB2 to enhance CREB oncogenic signaling (By similarity).</text>
</comment>
<comment type="subunit">
    <text evidence="2">Interacts with ERBB2 and IGFBP5.</text>
</comment>
<comment type="subcellular location">
    <subcellularLocation>
        <location evidence="8">Membrane</location>
        <topology>Single-pass type I membrane protein</topology>
    </subcellularLocation>
    <subcellularLocation>
        <location evidence="8">Cell projection</location>
        <location evidence="8">Axon</location>
    </subcellularLocation>
</comment>
<comment type="tissue specificity">
    <text evidence="8">At postnatal P0, expressed in heart, lung, liver, kidney, spleen and inner ear.</text>
</comment>
<comment type="developmental stage">
    <text evidence="8">At postnatal P0, expressed in heart, lung, liver, kidney, spleen and inner ear (PubMed:27162350). In the inner ear, at 14.5 dpc, detected in spiral ganglia, the cochlear epithelium and the vesitbule. At 17.5 dpc, expression increases in spiral ganglion neurons axon terminals adjacent to auditory hair cells. In the differentiating cochlear epithelium, the expression is intense in the stria vascularis. By P0, expression in the stria vascularis is weakened (PubMed:27162350).</text>
</comment>
<comment type="disruption phenotype">
    <text evidence="8">Mutant mice are severely deaf, with preserved otoacoustic emissions. They have malformed cochleae with fasciculation defects in axons of spiral ganglion neurons. Type I neurons show impaired synapses with inner hair cells and type II neurons display aberrant projections through the cochlear sensory epithelium.</text>
</comment>
<comment type="similarity">
    <text evidence="6">Belongs to the protein kinase superfamily. Tyr protein kinase family. ROR subfamily.</text>
</comment>
<reference key="1">
    <citation type="journal article" date="1999" name="Genes Cells">
        <title>Spatio-temporally regulated expression of receptor tyrosine kinases, mRor1, mRor2, during mouse development: implications in development and function of the nervous system.</title>
        <authorList>
            <person name="Oishi I."/>
            <person name="Takeuchi S."/>
            <person name="Hashimoto R."/>
            <person name="Nagabukuro A."/>
            <person name="Ueda T."/>
            <person name="Liu Z.J."/>
            <person name="Hatta T."/>
            <person name="Akira S."/>
            <person name="Matsuda Y."/>
            <person name="Yamamura H."/>
            <person name="Otani H."/>
            <person name="Minami Y."/>
        </authorList>
    </citation>
    <scope>NUCLEOTIDE SEQUENCE [MRNA]</scope>
</reference>
<reference key="2">
    <citation type="journal article" date="2005" name="Science">
        <title>The transcriptional landscape of the mammalian genome.</title>
        <authorList>
            <person name="Carninci P."/>
            <person name="Kasukawa T."/>
            <person name="Katayama S."/>
            <person name="Gough J."/>
            <person name="Frith M.C."/>
            <person name="Maeda N."/>
            <person name="Oyama R."/>
            <person name="Ravasi T."/>
            <person name="Lenhard B."/>
            <person name="Wells C."/>
            <person name="Kodzius R."/>
            <person name="Shimokawa K."/>
            <person name="Bajic V.B."/>
            <person name="Brenner S.E."/>
            <person name="Batalov S."/>
            <person name="Forrest A.R."/>
            <person name="Zavolan M."/>
            <person name="Davis M.J."/>
            <person name="Wilming L.G."/>
            <person name="Aidinis V."/>
            <person name="Allen J.E."/>
            <person name="Ambesi-Impiombato A."/>
            <person name="Apweiler R."/>
            <person name="Aturaliya R.N."/>
            <person name="Bailey T.L."/>
            <person name="Bansal M."/>
            <person name="Baxter L."/>
            <person name="Beisel K.W."/>
            <person name="Bersano T."/>
            <person name="Bono H."/>
            <person name="Chalk A.M."/>
            <person name="Chiu K.P."/>
            <person name="Choudhary V."/>
            <person name="Christoffels A."/>
            <person name="Clutterbuck D.R."/>
            <person name="Crowe M.L."/>
            <person name="Dalla E."/>
            <person name="Dalrymple B.P."/>
            <person name="de Bono B."/>
            <person name="Della Gatta G."/>
            <person name="di Bernardo D."/>
            <person name="Down T."/>
            <person name="Engstrom P."/>
            <person name="Fagiolini M."/>
            <person name="Faulkner G."/>
            <person name="Fletcher C.F."/>
            <person name="Fukushima T."/>
            <person name="Furuno M."/>
            <person name="Futaki S."/>
            <person name="Gariboldi M."/>
            <person name="Georgii-Hemming P."/>
            <person name="Gingeras T.R."/>
            <person name="Gojobori T."/>
            <person name="Green R.E."/>
            <person name="Gustincich S."/>
            <person name="Harbers M."/>
            <person name="Hayashi Y."/>
            <person name="Hensch T.K."/>
            <person name="Hirokawa N."/>
            <person name="Hill D."/>
            <person name="Huminiecki L."/>
            <person name="Iacono M."/>
            <person name="Ikeo K."/>
            <person name="Iwama A."/>
            <person name="Ishikawa T."/>
            <person name="Jakt M."/>
            <person name="Kanapin A."/>
            <person name="Katoh M."/>
            <person name="Kawasawa Y."/>
            <person name="Kelso J."/>
            <person name="Kitamura H."/>
            <person name="Kitano H."/>
            <person name="Kollias G."/>
            <person name="Krishnan S.P."/>
            <person name="Kruger A."/>
            <person name="Kummerfeld S.K."/>
            <person name="Kurochkin I.V."/>
            <person name="Lareau L.F."/>
            <person name="Lazarevic D."/>
            <person name="Lipovich L."/>
            <person name="Liu J."/>
            <person name="Liuni S."/>
            <person name="McWilliam S."/>
            <person name="Madan Babu M."/>
            <person name="Madera M."/>
            <person name="Marchionni L."/>
            <person name="Matsuda H."/>
            <person name="Matsuzawa S."/>
            <person name="Miki H."/>
            <person name="Mignone F."/>
            <person name="Miyake S."/>
            <person name="Morris K."/>
            <person name="Mottagui-Tabar S."/>
            <person name="Mulder N."/>
            <person name="Nakano N."/>
            <person name="Nakauchi H."/>
            <person name="Ng P."/>
            <person name="Nilsson R."/>
            <person name="Nishiguchi S."/>
            <person name="Nishikawa S."/>
            <person name="Nori F."/>
            <person name="Ohara O."/>
            <person name="Okazaki Y."/>
            <person name="Orlando V."/>
            <person name="Pang K.C."/>
            <person name="Pavan W.J."/>
            <person name="Pavesi G."/>
            <person name="Pesole G."/>
            <person name="Petrovsky N."/>
            <person name="Piazza S."/>
            <person name="Reed J."/>
            <person name="Reid J.F."/>
            <person name="Ring B.Z."/>
            <person name="Ringwald M."/>
            <person name="Rost B."/>
            <person name="Ruan Y."/>
            <person name="Salzberg S.L."/>
            <person name="Sandelin A."/>
            <person name="Schneider C."/>
            <person name="Schoenbach C."/>
            <person name="Sekiguchi K."/>
            <person name="Semple C.A."/>
            <person name="Seno S."/>
            <person name="Sessa L."/>
            <person name="Sheng Y."/>
            <person name="Shibata Y."/>
            <person name="Shimada H."/>
            <person name="Shimada K."/>
            <person name="Silva D."/>
            <person name="Sinclair B."/>
            <person name="Sperling S."/>
            <person name="Stupka E."/>
            <person name="Sugiura K."/>
            <person name="Sultana R."/>
            <person name="Takenaka Y."/>
            <person name="Taki K."/>
            <person name="Tammoja K."/>
            <person name="Tan S.L."/>
            <person name="Tang S."/>
            <person name="Taylor M.S."/>
            <person name="Tegner J."/>
            <person name="Teichmann S.A."/>
            <person name="Ueda H.R."/>
            <person name="van Nimwegen E."/>
            <person name="Verardo R."/>
            <person name="Wei C.L."/>
            <person name="Yagi K."/>
            <person name="Yamanishi H."/>
            <person name="Zabarovsky E."/>
            <person name="Zhu S."/>
            <person name="Zimmer A."/>
            <person name="Hide W."/>
            <person name="Bult C."/>
            <person name="Grimmond S.M."/>
            <person name="Teasdale R.D."/>
            <person name="Liu E.T."/>
            <person name="Brusic V."/>
            <person name="Quackenbush J."/>
            <person name="Wahlestedt C."/>
            <person name="Mattick J.S."/>
            <person name="Hume D.A."/>
            <person name="Kai C."/>
            <person name="Sasaki D."/>
            <person name="Tomaru Y."/>
            <person name="Fukuda S."/>
            <person name="Kanamori-Katayama M."/>
            <person name="Suzuki M."/>
            <person name="Aoki J."/>
            <person name="Arakawa T."/>
            <person name="Iida J."/>
            <person name="Imamura K."/>
            <person name="Itoh M."/>
            <person name="Kato T."/>
            <person name="Kawaji H."/>
            <person name="Kawagashira N."/>
            <person name="Kawashima T."/>
            <person name="Kojima M."/>
            <person name="Kondo S."/>
            <person name="Konno H."/>
            <person name="Nakano K."/>
            <person name="Ninomiya N."/>
            <person name="Nishio T."/>
            <person name="Okada M."/>
            <person name="Plessy C."/>
            <person name="Shibata K."/>
            <person name="Shiraki T."/>
            <person name="Suzuki S."/>
            <person name="Tagami M."/>
            <person name="Waki K."/>
            <person name="Watahiki A."/>
            <person name="Okamura-Oho Y."/>
            <person name="Suzuki H."/>
            <person name="Kawai J."/>
            <person name="Hayashizaki Y."/>
        </authorList>
    </citation>
    <scope>NUCLEOTIDE SEQUENCE [LARGE SCALE MRNA]</scope>
    <source>
        <strain>C57BL/6J</strain>
        <tissue>Adipose tissue</tissue>
    </source>
</reference>
<reference key="3">
    <citation type="journal article" date="2009" name="PLoS Biol.">
        <title>Lineage-specific biology revealed by a finished genome assembly of the mouse.</title>
        <authorList>
            <person name="Church D.M."/>
            <person name="Goodstadt L."/>
            <person name="Hillier L.W."/>
            <person name="Zody M.C."/>
            <person name="Goldstein S."/>
            <person name="She X."/>
            <person name="Bult C.J."/>
            <person name="Agarwala R."/>
            <person name="Cherry J.L."/>
            <person name="DiCuccio M."/>
            <person name="Hlavina W."/>
            <person name="Kapustin Y."/>
            <person name="Meric P."/>
            <person name="Maglott D."/>
            <person name="Birtle Z."/>
            <person name="Marques A.C."/>
            <person name="Graves T."/>
            <person name="Zhou S."/>
            <person name="Teague B."/>
            <person name="Potamousis K."/>
            <person name="Churas C."/>
            <person name="Place M."/>
            <person name="Herschleb J."/>
            <person name="Runnheim R."/>
            <person name="Forrest D."/>
            <person name="Amos-Landgraf J."/>
            <person name="Schwartz D.C."/>
            <person name="Cheng Z."/>
            <person name="Lindblad-Toh K."/>
            <person name="Eichler E.E."/>
            <person name="Ponting C.P."/>
        </authorList>
    </citation>
    <scope>NUCLEOTIDE SEQUENCE [LARGE SCALE GENOMIC DNA]</scope>
    <source>
        <strain>C57BL/6J</strain>
    </source>
</reference>
<reference key="4">
    <citation type="journal article" date="2004" name="Genome Res.">
        <title>The status, quality, and expansion of the NIH full-length cDNA project: the Mammalian Gene Collection (MGC).</title>
        <authorList>
            <consortium name="The MGC Project Team"/>
        </authorList>
    </citation>
    <scope>NUCLEOTIDE SEQUENCE [LARGE SCALE MRNA]</scope>
    <source>
        <tissue>Lung</tissue>
    </source>
</reference>
<reference key="5">
    <citation type="journal article" date="2016" name="Proc. Natl. Acad. Sci. U.S.A.">
        <title>ROR1 is essential for proper innervation of auditory hair cells and hearing in humans and mice.</title>
        <authorList>
            <person name="Diaz-Horta O."/>
            <person name="Abad C."/>
            <person name="Sennaroglu L."/>
            <person name="Foster J. II"/>
            <person name="DeSmidt A."/>
            <person name="Bademci G."/>
            <person name="Tokgoz-Yilmaz S."/>
            <person name="Duman D."/>
            <person name="Cengiz F.B."/>
            <person name="Grati M."/>
            <person name="Fitoz S."/>
            <person name="Liu X.Z."/>
            <person name="Farooq A."/>
            <person name="Imtiaz F."/>
            <person name="Currall B.B."/>
            <person name="Morton C.C."/>
            <person name="Nishita M."/>
            <person name="Minami Y."/>
            <person name="Lu Z."/>
            <person name="Walz K."/>
            <person name="Tekin M."/>
        </authorList>
    </citation>
    <scope>FUNCTION</scope>
    <scope>DISRUPTION PHENOTYPE</scope>
    <scope>DEVELOPMENTAL STAGE</scope>
    <scope>TISSUE SPECIFICITY</scope>
    <scope>SUBCELLULAR LOCATION</scope>
</reference>
<gene>
    <name type="primary">Ror1</name>
    <name type="synonym">Ntrkr1</name>
</gene>
<protein>
    <recommendedName>
        <fullName evidence="2">Inactive tyrosine-protein kinase transmembrane receptor ROR1</fullName>
        <shortName>mROR1</shortName>
    </recommendedName>
    <alternativeName>
        <fullName>Neurotrophic tyrosine kinase, receptor-related 1</fullName>
    </alternativeName>
</protein>
<feature type="signal peptide" evidence="3">
    <location>
        <begin position="1"/>
        <end position="29"/>
    </location>
</feature>
<feature type="chain" id="PRO_0000024459" description="Inactive tyrosine-protein kinase transmembrane receptor ROR1">
    <location>
        <begin position="30"/>
        <end position="937"/>
    </location>
</feature>
<feature type="topological domain" description="Extracellular" evidence="3">
    <location>
        <begin position="30"/>
        <end position="406"/>
    </location>
</feature>
<feature type="transmembrane region" description="Helical" evidence="3">
    <location>
        <begin position="407"/>
        <end position="427"/>
    </location>
</feature>
<feature type="topological domain" description="Cytoplasmic" evidence="3">
    <location>
        <begin position="428"/>
        <end position="937"/>
    </location>
</feature>
<feature type="domain" description="Ig-like C2-type">
    <location>
        <begin position="42"/>
        <end position="141"/>
    </location>
</feature>
<feature type="domain" description="FZ" evidence="4">
    <location>
        <begin position="165"/>
        <end position="299"/>
    </location>
</feature>
<feature type="domain" description="Kringle" evidence="5">
    <location>
        <begin position="312"/>
        <end position="391"/>
    </location>
</feature>
<feature type="domain" description="Protein kinase" evidence="6">
    <location>
        <begin position="473"/>
        <end position="746"/>
    </location>
</feature>
<feature type="region of interest" description="Disordered" evidence="7">
    <location>
        <begin position="753"/>
        <end position="778"/>
    </location>
</feature>
<feature type="region of interest" description="Disordered" evidence="7">
    <location>
        <begin position="840"/>
        <end position="890"/>
    </location>
</feature>
<feature type="region of interest" description="Disordered" evidence="7">
    <location>
        <begin position="916"/>
        <end position="937"/>
    </location>
</feature>
<feature type="compositionally biased region" description="Low complexity" evidence="7">
    <location>
        <begin position="753"/>
        <end position="762"/>
    </location>
</feature>
<feature type="compositionally biased region" description="Polar residues" evidence="7">
    <location>
        <begin position="763"/>
        <end position="778"/>
    </location>
</feature>
<feature type="compositionally biased region" description="Low complexity" evidence="7">
    <location>
        <begin position="854"/>
        <end position="864"/>
    </location>
</feature>
<feature type="compositionally biased region" description="Polar residues" evidence="7">
    <location>
        <begin position="865"/>
        <end position="880"/>
    </location>
</feature>
<feature type="binding site" evidence="6">
    <location>
        <begin position="479"/>
        <end position="487"/>
    </location>
    <ligand>
        <name>ATP</name>
        <dbReference type="ChEBI" id="CHEBI:30616"/>
    </ligand>
</feature>
<feature type="binding site" evidence="6">
    <location>
        <position position="506"/>
    </location>
    <ligand>
        <name>ATP</name>
        <dbReference type="ChEBI" id="CHEBI:30616"/>
    </ligand>
</feature>
<feature type="modified residue" description="Phosphotyrosine; by autocatalysis" evidence="1">
    <location>
        <position position="645"/>
    </location>
</feature>
<feature type="glycosylation site" description="N-linked (GlcNAc...) asparagine" evidence="3">
    <location>
        <position position="47"/>
    </location>
</feature>
<feature type="glycosylation site" description="N-linked (GlcNAc...) asparagine" evidence="3">
    <location>
        <position position="66"/>
    </location>
</feature>
<feature type="glycosylation site" description="N-linked (GlcNAc...) asparagine" evidence="3">
    <location>
        <position position="184"/>
    </location>
</feature>
<feature type="glycosylation site" description="N-linked (GlcNAc...) asparagine" evidence="3">
    <location>
        <position position="315"/>
    </location>
</feature>
<feature type="disulfide bond" evidence="1">
    <location>
        <begin position="79"/>
        <end position="131"/>
    </location>
</feature>
<feature type="disulfide bond" evidence="1">
    <location>
        <begin position="170"/>
        <end position="235"/>
    </location>
</feature>
<feature type="disulfide bond" evidence="1">
    <location>
        <begin position="178"/>
        <end position="228"/>
    </location>
</feature>
<feature type="disulfide bond" evidence="1">
    <location>
        <begin position="219"/>
        <end position="260"/>
    </location>
</feature>
<feature type="disulfide bond" evidence="1">
    <location>
        <begin position="248"/>
        <end position="296"/>
    </location>
</feature>
<feature type="disulfide bond" evidence="1">
    <location>
        <begin position="252"/>
        <end position="282"/>
    </location>
</feature>
<feature type="disulfide bond" evidence="1">
    <location>
        <begin position="313"/>
        <end position="391"/>
    </location>
</feature>
<feature type="disulfide bond" evidence="1">
    <location>
        <begin position="334"/>
        <end position="374"/>
    </location>
</feature>
<feature type="disulfide bond" evidence="1">
    <location>
        <begin position="362"/>
        <end position="386"/>
    </location>
</feature>
<feature type="sequence conflict" description="In Ref. 1; BAA75480." evidence="9" ref="1">
    <original>S</original>
    <variation>R</variation>
    <location>
        <position position="860"/>
    </location>
</feature>
<accession>Q9Z139</accession>
<accession>Q8BG10</accession>
<dbReference type="EMBL" id="AB010383">
    <property type="protein sequence ID" value="BAA75480.1"/>
    <property type="molecule type" value="mRNA"/>
</dbReference>
<dbReference type="EMBL" id="AK046699">
    <property type="protein sequence ID" value="BAC32840.1"/>
    <property type="molecule type" value="mRNA"/>
</dbReference>
<dbReference type="EMBL" id="AK049369">
    <property type="protein sequence ID" value="BAC33714.1"/>
    <property type="molecule type" value="mRNA"/>
</dbReference>
<dbReference type="EMBL" id="AL670246">
    <property type="status" value="NOT_ANNOTATED_CDS"/>
    <property type="molecule type" value="Genomic_DNA"/>
</dbReference>
<dbReference type="EMBL" id="AL772259">
    <property type="status" value="NOT_ANNOTATED_CDS"/>
    <property type="molecule type" value="Genomic_DNA"/>
</dbReference>
<dbReference type="EMBL" id="BC138794">
    <property type="protein sequence ID" value="AAI38795.1"/>
    <property type="molecule type" value="mRNA"/>
</dbReference>
<dbReference type="EMBL" id="BC138810">
    <property type="protein sequence ID" value="AAI38811.1"/>
    <property type="molecule type" value="mRNA"/>
</dbReference>
<dbReference type="CCDS" id="CCDS18389.1"/>
<dbReference type="RefSeq" id="NP_001299619.1">
    <property type="nucleotide sequence ID" value="NM_001312690.1"/>
</dbReference>
<dbReference type="RefSeq" id="NP_038873.2">
    <property type="nucleotide sequence ID" value="NM_013845.5"/>
</dbReference>
<dbReference type="SMR" id="Q9Z139"/>
<dbReference type="BioGRID" id="205021">
    <property type="interactions" value="14"/>
</dbReference>
<dbReference type="CORUM" id="Q9Z139"/>
<dbReference type="FunCoup" id="Q9Z139">
    <property type="interactions" value="255"/>
</dbReference>
<dbReference type="STRING" id="10090.ENSMUSP00000048171"/>
<dbReference type="ChEMBL" id="CHEMBL2176781"/>
<dbReference type="GlyCosmos" id="Q9Z139">
    <property type="glycosylation" value="4 sites, No reported glycans"/>
</dbReference>
<dbReference type="GlyGen" id="Q9Z139">
    <property type="glycosylation" value="5 sites, 2 N-linked glycans (2 sites)"/>
</dbReference>
<dbReference type="iPTMnet" id="Q9Z139"/>
<dbReference type="PhosphoSitePlus" id="Q9Z139"/>
<dbReference type="PaxDb" id="10090-ENSMUSP00000048171"/>
<dbReference type="ProteomicsDB" id="300464"/>
<dbReference type="ABCD" id="Q9Z139">
    <property type="antibodies" value="23 sequenced antibodies"/>
</dbReference>
<dbReference type="Antibodypedia" id="33360">
    <property type="antibodies" value="919 antibodies from 42 providers"/>
</dbReference>
<dbReference type="DNASU" id="26563"/>
<dbReference type="Ensembl" id="ENSMUST00000039630.6">
    <property type="protein sequence ID" value="ENSMUSP00000048171.6"/>
    <property type="gene ID" value="ENSMUSG00000035305.6"/>
</dbReference>
<dbReference type="GeneID" id="26563"/>
<dbReference type="KEGG" id="mmu:26563"/>
<dbReference type="UCSC" id="uc008tvd.1">
    <property type="organism name" value="mouse"/>
</dbReference>
<dbReference type="AGR" id="MGI:1347520"/>
<dbReference type="CTD" id="4919"/>
<dbReference type="MGI" id="MGI:1347520">
    <property type="gene designation" value="Ror1"/>
</dbReference>
<dbReference type="VEuPathDB" id="HostDB:ENSMUSG00000035305"/>
<dbReference type="eggNOG" id="KOG1026">
    <property type="taxonomic scope" value="Eukaryota"/>
</dbReference>
<dbReference type="GeneTree" id="ENSGT00940000153947"/>
<dbReference type="HOGENOM" id="CLU_000288_30_4_1"/>
<dbReference type="InParanoid" id="Q9Z139"/>
<dbReference type="OMA" id="IQNDECP"/>
<dbReference type="OrthoDB" id="2431000at2759"/>
<dbReference type="PhylomeDB" id="Q9Z139"/>
<dbReference type="TreeFam" id="TF106465"/>
<dbReference type="Reactome" id="R-MMU-5140745">
    <property type="pathway name" value="WNT5A-dependent internalization of FZD2, FZD5 and ROR2"/>
</dbReference>
<dbReference type="BioGRID-ORCS" id="26563">
    <property type="hits" value="0 hits in 79 CRISPR screens"/>
</dbReference>
<dbReference type="ChiTaRS" id="Ror1">
    <property type="organism name" value="mouse"/>
</dbReference>
<dbReference type="PRO" id="PR:Q9Z139"/>
<dbReference type="Proteomes" id="UP000000589">
    <property type="component" value="Chromosome 4"/>
</dbReference>
<dbReference type="RNAct" id="Q9Z139">
    <property type="molecule type" value="protein"/>
</dbReference>
<dbReference type="Bgee" id="ENSMUSG00000035305">
    <property type="expression patterns" value="Expressed in ureter smooth muscle and 199 other cell types or tissues"/>
</dbReference>
<dbReference type="GO" id="GO:0043679">
    <property type="term" value="C:axon terminus"/>
    <property type="evidence" value="ECO:0000314"/>
    <property type="project" value="UniProtKB"/>
</dbReference>
<dbReference type="GO" id="GO:0009986">
    <property type="term" value="C:cell surface"/>
    <property type="evidence" value="ECO:0007669"/>
    <property type="project" value="Ensembl"/>
</dbReference>
<dbReference type="GO" id="GO:0005886">
    <property type="term" value="C:plasma membrane"/>
    <property type="evidence" value="ECO:0000250"/>
    <property type="project" value="UniProtKB"/>
</dbReference>
<dbReference type="GO" id="GO:0043235">
    <property type="term" value="C:receptor complex"/>
    <property type="evidence" value="ECO:0000266"/>
    <property type="project" value="MGI"/>
</dbReference>
<dbReference type="GO" id="GO:0001725">
    <property type="term" value="C:stress fiber"/>
    <property type="evidence" value="ECO:0007669"/>
    <property type="project" value="Ensembl"/>
</dbReference>
<dbReference type="GO" id="GO:0005524">
    <property type="term" value="F:ATP binding"/>
    <property type="evidence" value="ECO:0007669"/>
    <property type="project" value="UniProtKB-KW"/>
</dbReference>
<dbReference type="GO" id="GO:0004714">
    <property type="term" value="F:transmembrane receptor protein tyrosine kinase activity"/>
    <property type="evidence" value="ECO:0000304"/>
    <property type="project" value="MGI"/>
</dbReference>
<dbReference type="GO" id="GO:0042813">
    <property type="term" value="F:Wnt receptor activity"/>
    <property type="evidence" value="ECO:0000250"/>
    <property type="project" value="UniProtKB"/>
</dbReference>
<dbReference type="GO" id="GO:0017147">
    <property type="term" value="F:Wnt-protein binding"/>
    <property type="evidence" value="ECO:0007669"/>
    <property type="project" value="Ensembl"/>
</dbReference>
<dbReference type="GO" id="GO:0014002">
    <property type="term" value="P:astrocyte development"/>
    <property type="evidence" value="ECO:0007669"/>
    <property type="project" value="Ensembl"/>
</dbReference>
<dbReference type="GO" id="GO:0008283">
    <property type="term" value="P:cell population proliferation"/>
    <property type="evidence" value="ECO:0007669"/>
    <property type="project" value="Ensembl"/>
</dbReference>
<dbReference type="GO" id="GO:0007169">
    <property type="term" value="P:cell surface receptor protein tyrosine kinase signaling pathway"/>
    <property type="evidence" value="ECO:0007669"/>
    <property type="project" value="InterPro"/>
</dbReference>
<dbReference type="GO" id="GO:0048839">
    <property type="term" value="P:inner ear development"/>
    <property type="evidence" value="ECO:0000315"/>
    <property type="project" value="UniProtKB"/>
</dbReference>
<dbReference type="GO" id="GO:0043123">
    <property type="term" value="P:positive regulation of canonical NF-kappaB signal transduction"/>
    <property type="evidence" value="ECO:0000250"/>
    <property type="project" value="UniProtKB"/>
</dbReference>
<dbReference type="GO" id="GO:0051092">
    <property type="term" value="P:positive regulation of NF-kappaB transcription factor activity"/>
    <property type="evidence" value="ECO:0000250"/>
    <property type="project" value="UniProtKB"/>
</dbReference>
<dbReference type="GO" id="GO:0007605">
    <property type="term" value="P:sensory perception of sound"/>
    <property type="evidence" value="ECO:0000250"/>
    <property type="project" value="UniProtKB"/>
</dbReference>
<dbReference type="CDD" id="cd07467">
    <property type="entry name" value="CRD_TK_ROR1"/>
    <property type="match status" value="1"/>
</dbReference>
<dbReference type="CDD" id="cd00108">
    <property type="entry name" value="KR"/>
    <property type="match status" value="1"/>
</dbReference>
<dbReference type="CDD" id="cd05090">
    <property type="entry name" value="PTKc_Ror1"/>
    <property type="match status" value="1"/>
</dbReference>
<dbReference type="FunFam" id="1.10.2000.10:FF:000002">
    <property type="entry name" value="Inactive tyrosine-protein kinase transmembrane receptor ROR1"/>
    <property type="match status" value="1"/>
</dbReference>
<dbReference type="FunFam" id="2.40.20.10:FF:000003">
    <property type="entry name" value="Inactive tyrosine-protein kinase transmembrane receptor ROR1"/>
    <property type="match status" value="1"/>
</dbReference>
<dbReference type="FunFam" id="2.60.40.10:FF:000242">
    <property type="entry name" value="Inactive tyrosine-protein kinase transmembrane receptor ROR1"/>
    <property type="match status" value="1"/>
</dbReference>
<dbReference type="FunFam" id="1.10.510.10:FF:000116">
    <property type="entry name" value="inactive tyrosine-protein kinase transmembrane receptor ROR1"/>
    <property type="match status" value="1"/>
</dbReference>
<dbReference type="FunFam" id="3.30.200.20:FF:000139">
    <property type="entry name" value="inactive tyrosine-protein kinase transmembrane receptor ROR1"/>
    <property type="match status" value="1"/>
</dbReference>
<dbReference type="Gene3D" id="1.10.2000.10">
    <property type="entry name" value="Frizzled cysteine-rich domain"/>
    <property type="match status" value="1"/>
</dbReference>
<dbReference type="Gene3D" id="2.60.40.10">
    <property type="entry name" value="Immunoglobulins"/>
    <property type="match status" value="1"/>
</dbReference>
<dbReference type="Gene3D" id="3.30.200.20">
    <property type="entry name" value="Phosphorylase Kinase, domain 1"/>
    <property type="match status" value="1"/>
</dbReference>
<dbReference type="Gene3D" id="2.40.20.10">
    <property type="entry name" value="Plasminogen Kringle 4"/>
    <property type="match status" value="1"/>
</dbReference>
<dbReference type="Gene3D" id="1.10.510.10">
    <property type="entry name" value="Transferase(Phosphotransferase) domain 1"/>
    <property type="match status" value="1"/>
</dbReference>
<dbReference type="InterPro" id="IPR020067">
    <property type="entry name" value="Frizzled_dom"/>
</dbReference>
<dbReference type="InterPro" id="IPR036790">
    <property type="entry name" value="Frizzled_dom_sf"/>
</dbReference>
<dbReference type="InterPro" id="IPR007110">
    <property type="entry name" value="Ig-like_dom"/>
</dbReference>
<dbReference type="InterPro" id="IPR036179">
    <property type="entry name" value="Ig-like_dom_sf"/>
</dbReference>
<dbReference type="InterPro" id="IPR013783">
    <property type="entry name" value="Ig-like_fold"/>
</dbReference>
<dbReference type="InterPro" id="IPR013098">
    <property type="entry name" value="Ig_I-set"/>
</dbReference>
<dbReference type="InterPro" id="IPR003599">
    <property type="entry name" value="Ig_sub"/>
</dbReference>
<dbReference type="InterPro" id="IPR003598">
    <property type="entry name" value="Ig_sub2"/>
</dbReference>
<dbReference type="InterPro" id="IPR011009">
    <property type="entry name" value="Kinase-like_dom_sf"/>
</dbReference>
<dbReference type="InterPro" id="IPR000001">
    <property type="entry name" value="Kringle"/>
</dbReference>
<dbReference type="InterPro" id="IPR013806">
    <property type="entry name" value="Kringle-like"/>
</dbReference>
<dbReference type="InterPro" id="IPR018056">
    <property type="entry name" value="Kringle_CS"/>
</dbReference>
<dbReference type="InterPro" id="IPR038178">
    <property type="entry name" value="Kringle_sf"/>
</dbReference>
<dbReference type="InterPro" id="IPR000719">
    <property type="entry name" value="Prot_kinase_dom"/>
</dbReference>
<dbReference type="InterPro" id="IPR050122">
    <property type="entry name" value="RTK"/>
</dbReference>
<dbReference type="InterPro" id="IPR001245">
    <property type="entry name" value="Ser-Thr/Tyr_kinase_cat_dom"/>
</dbReference>
<dbReference type="InterPro" id="IPR008266">
    <property type="entry name" value="Tyr_kinase_AS"/>
</dbReference>
<dbReference type="InterPro" id="IPR016247">
    <property type="entry name" value="Tyr_kinase_rcpt_ROR"/>
</dbReference>
<dbReference type="PANTHER" id="PTHR24416:SF134">
    <property type="entry name" value="INACTIVE TYROSINE-PROTEIN KINASE TRANSMEMBRANE RECEPTOR ROR1"/>
    <property type="match status" value="1"/>
</dbReference>
<dbReference type="PANTHER" id="PTHR24416">
    <property type="entry name" value="TYROSINE-PROTEIN KINASE RECEPTOR"/>
    <property type="match status" value="1"/>
</dbReference>
<dbReference type="Pfam" id="PF01392">
    <property type="entry name" value="Fz"/>
    <property type="match status" value="1"/>
</dbReference>
<dbReference type="Pfam" id="PF07679">
    <property type="entry name" value="I-set"/>
    <property type="match status" value="1"/>
</dbReference>
<dbReference type="Pfam" id="PF00051">
    <property type="entry name" value="Kringle"/>
    <property type="match status" value="1"/>
</dbReference>
<dbReference type="Pfam" id="PF07714">
    <property type="entry name" value="PK_Tyr_Ser-Thr"/>
    <property type="match status" value="1"/>
</dbReference>
<dbReference type="PIRSF" id="PIRSF000624">
    <property type="entry name" value="TyrPK_TMrec_ROR"/>
    <property type="match status" value="1"/>
</dbReference>
<dbReference type="PRINTS" id="PR00018">
    <property type="entry name" value="KRINGLE"/>
</dbReference>
<dbReference type="PRINTS" id="PR00109">
    <property type="entry name" value="TYRKINASE"/>
</dbReference>
<dbReference type="SMART" id="SM00409">
    <property type="entry name" value="IG"/>
    <property type="match status" value="1"/>
</dbReference>
<dbReference type="SMART" id="SM00408">
    <property type="entry name" value="IGc2"/>
    <property type="match status" value="1"/>
</dbReference>
<dbReference type="SMART" id="SM00130">
    <property type="entry name" value="KR"/>
    <property type="match status" value="1"/>
</dbReference>
<dbReference type="SUPFAM" id="SSF48726">
    <property type="entry name" value="Immunoglobulin"/>
    <property type="match status" value="1"/>
</dbReference>
<dbReference type="SUPFAM" id="SSF57440">
    <property type="entry name" value="Kringle-like"/>
    <property type="match status" value="1"/>
</dbReference>
<dbReference type="SUPFAM" id="SSF56112">
    <property type="entry name" value="Protein kinase-like (PK-like)"/>
    <property type="match status" value="1"/>
</dbReference>
<dbReference type="PROSITE" id="PS50038">
    <property type="entry name" value="FZ"/>
    <property type="match status" value="1"/>
</dbReference>
<dbReference type="PROSITE" id="PS50835">
    <property type="entry name" value="IG_LIKE"/>
    <property type="match status" value="1"/>
</dbReference>
<dbReference type="PROSITE" id="PS00021">
    <property type="entry name" value="KRINGLE_1"/>
    <property type="match status" value="1"/>
</dbReference>
<dbReference type="PROSITE" id="PS50070">
    <property type="entry name" value="KRINGLE_2"/>
    <property type="match status" value="1"/>
</dbReference>
<dbReference type="PROSITE" id="PS50011">
    <property type="entry name" value="PROTEIN_KINASE_DOM"/>
    <property type="match status" value="1"/>
</dbReference>
<dbReference type="PROSITE" id="PS00109">
    <property type="entry name" value="PROTEIN_KINASE_TYR"/>
    <property type="match status" value="1"/>
</dbReference>
<sequence>MHRPRRRGTRPPPLALLAALLLAARGADAQETELSVSAELVPTSSWNTSSEIDKGSYLTLDEPMNNITTSLGQTAELHCKVSGNPPPSIRWFKNDAPVVQEPRRISFRATNYGSRLRIRNLDTTDTGYFQCVATNGKKVVSTTGVLFVKFGPPPTASPGSSDEYEEDGFCQPYRGIACARFIGNRTVYMESLHMQGEIENQITAAFTMIGTSSHLSDKCSQFAIPSLCHYAFPYCDETSSVPKPRDLCRDECEVLENVLCQTEYIFARSNPMILMRLKLPNCEDLPQPESPEAANCIRIGIPMADPINKNHKCYNSTGVDYRGTVSVTKSGRQCQPWNSQYPHTHSFTALRFPELNGGHSYCRNPGNQKEAPWCFTLDENFKSDLCDIPACDSKDSKEKNKMEILYILVPSVAIPLAIAFLFFFICVCRNNQKSSSPPVQRQPKPVRGQNVEMSMLNAYKPKSKAKELPLSAVRFMEELGECTFGKIYKGHLYLPGMDHAQLVAIKTLKDYNNPQQWTEFQQEASLMAELHHPNIVCLLGAVTQEQPVCMLFEYMNQGDLHEFLIMRSPHSDVGCSSDEDGTVKSSLDHGDFLHIAIQIAAGMEYLSSHFFVHKDLAARNILIGEQLHVKISDLGLSREIYSADYYRVQSKSSLPIRWMPPEAIMYGKFSSDSDIWSFGVVLWEIFSFGLQPYYGFSNQEVIEMVRKRQLLPCSEDCPPRMYSLMTECWNEIPSRRPRFKDIHVRLRSWEGLSSHTSSTTPSGGNATTQTTSLSASPVSNLSNPRFPNYMFPSQGITPQGQIAGFIGPAIPQNQRFIPINGYPIPPGYAAFPAAHYQPAGPPRVIQHCPPPKSRSPSSASGSTSTGHVASLPSSGSNQEANVPLLPHMSIPNHPGGMGITVFGNKSQKPYKIDSKQSSLLGDSHIHGHTESMISAEV</sequence>